<accession>A9BNG6</accession>
<reference key="1">
    <citation type="submission" date="2007-11" db="EMBL/GenBank/DDBJ databases">
        <title>Complete sequence of Delftia acidovorans DSM 14801 / SPH-1.</title>
        <authorList>
            <person name="Copeland A."/>
            <person name="Lucas S."/>
            <person name="Lapidus A."/>
            <person name="Barry K."/>
            <person name="Glavina del Rio T."/>
            <person name="Dalin E."/>
            <person name="Tice H."/>
            <person name="Pitluck S."/>
            <person name="Lowry S."/>
            <person name="Clum A."/>
            <person name="Schmutz J."/>
            <person name="Larimer F."/>
            <person name="Land M."/>
            <person name="Hauser L."/>
            <person name="Kyrpides N."/>
            <person name="Kim E."/>
            <person name="Schleheck D."/>
            <person name="Richardson P."/>
        </authorList>
    </citation>
    <scope>NUCLEOTIDE SEQUENCE [LARGE SCALE GENOMIC DNA]</scope>
    <source>
        <strain>DSM 14801 / SPH-1</strain>
    </source>
</reference>
<protein>
    <recommendedName>
        <fullName evidence="1">Chaperone protein DnaJ</fullName>
    </recommendedName>
</protein>
<feature type="chain" id="PRO_1000137678" description="Chaperone protein DnaJ">
    <location>
        <begin position="1"/>
        <end position="380"/>
    </location>
</feature>
<feature type="domain" description="J" evidence="1">
    <location>
        <begin position="5"/>
        <end position="72"/>
    </location>
</feature>
<feature type="repeat" description="CXXCXGXG motif">
    <location>
        <begin position="153"/>
        <end position="160"/>
    </location>
</feature>
<feature type="repeat" description="CXXCXGXG motif">
    <location>
        <begin position="170"/>
        <end position="177"/>
    </location>
</feature>
<feature type="repeat" description="CXXCXGXG motif">
    <location>
        <begin position="192"/>
        <end position="199"/>
    </location>
</feature>
<feature type="repeat" description="CXXCXGXG motif">
    <location>
        <begin position="206"/>
        <end position="213"/>
    </location>
</feature>
<feature type="zinc finger region" description="CR-type" evidence="1">
    <location>
        <begin position="140"/>
        <end position="218"/>
    </location>
</feature>
<feature type="region of interest" description="Disordered" evidence="2">
    <location>
        <begin position="359"/>
        <end position="380"/>
    </location>
</feature>
<feature type="compositionally biased region" description="Basic and acidic residues" evidence="2">
    <location>
        <begin position="371"/>
        <end position="380"/>
    </location>
</feature>
<feature type="binding site" evidence="1">
    <location>
        <position position="153"/>
    </location>
    <ligand>
        <name>Zn(2+)</name>
        <dbReference type="ChEBI" id="CHEBI:29105"/>
        <label>1</label>
    </ligand>
</feature>
<feature type="binding site" evidence="1">
    <location>
        <position position="156"/>
    </location>
    <ligand>
        <name>Zn(2+)</name>
        <dbReference type="ChEBI" id="CHEBI:29105"/>
        <label>1</label>
    </ligand>
</feature>
<feature type="binding site" evidence="1">
    <location>
        <position position="170"/>
    </location>
    <ligand>
        <name>Zn(2+)</name>
        <dbReference type="ChEBI" id="CHEBI:29105"/>
        <label>2</label>
    </ligand>
</feature>
<feature type="binding site" evidence="1">
    <location>
        <position position="173"/>
    </location>
    <ligand>
        <name>Zn(2+)</name>
        <dbReference type="ChEBI" id="CHEBI:29105"/>
        <label>2</label>
    </ligand>
</feature>
<feature type="binding site" evidence="1">
    <location>
        <position position="192"/>
    </location>
    <ligand>
        <name>Zn(2+)</name>
        <dbReference type="ChEBI" id="CHEBI:29105"/>
        <label>2</label>
    </ligand>
</feature>
<feature type="binding site" evidence="1">
    <location>
        <position position="195"/>
    </location>
    <ligand>
        <name>Zn(2+)</name>
        <dbReference type="ChEBI" id="CHEBI:29105"/>
        <label>2</label>
    </ligand>
</feature>
<feature type="binding site" evidence="1">
    <location>
        <position position="206"/>
    </location>
    <ligand>
        <name>Zn(2+)</name>
        <dbReference type="ChEBI" id="CHEBI:29105"/>
        <label>1</label>
    </ligand>
</feature>
<feature type="binding site" evidence="1">
    <location>
        <position position="209"/>
    </location>
    <ligand>
        <name>Zn(2+)</name>
        <dbReference type="ChEBI" id="CHEBI:29105"/>
        <label>1</label>
    </ligand>
</feature>
<gene>
    <name evidence="1" type="primary">dnaJ</name>
    <name type="ordered locus">Daci_5232</name>
</gene>
<comment type="function">
    <text evidence="1">Participates actively in the response to hyperosmotic and heat shock by preventing the aggregation of stress-denatured proteins and by disaggregating proteins, also in an autonomous, DnaK-independent fashion. Unfolded proteins bind initially to DnaJ; upon interaction with the DnaJ-bound protein, DnaK hydrolyzes its bound ATP, resulting in the formation of a stable complex. GrpE releases ADP from DnaK; ATP binding to DnaK triggers the release of the substrate protein, thus completing the reaction cycle. Several rounds of ATP-dependent interactions between DnaJ, DnaK and GrpE are required for fully efficient folding. Also involved, together with DnaK and GrpE, in the DNA replication of plasmids through activation of initiation proteins.</text>
</comment>
<comment type="cofactor">
    <cofactor evidence="1">
        <name>Zn(2+)</name>
        <dbReference type="ChEBI" id="CHEBI:29105"/>
    </cofactor>
    <text evidence="1">Binds 2 Zn(2+) ions per monomer.</text>
</comment>
<comment type="subunit">
    <text evidence="1">Homodimer.</text>
</comment>
<comment type="subcellular location">
    <subcellularLocation>
        <location evidence="1">Cytoplasm</location>
    </subcellularLocation>
</comment>
<comment type="domain">
    <text evidence="1">The J domain is necessary and sufficient to stimulate DnaK ATPase activity. Zinc center 1 plays an important role in the autonomous, DnaK-independent chaperone activity of DnaJ. Zinc center 2 is essential for interaction with DnaK and for DnaJ activity.</text>
</comment>
<comment type="similarity">
    <text evidence="1">Belongs to the DnaJ family.</text>
</comment>
<evidence type="ECO:0000255" key="1">
    <source>
        <dbReference type="HAMAP-Rule" id="MF_01152"/>
    </source>
</evidence>
<evidence type="ECO:0000256" key="2">
    <source>
        <dbReference type="SAM" id="MobiDB-lite"/>
    </source>
</evidence>
<keyword id="KW-0143">Chaperone</keyword>
<keyword id="KW-0963">Cytoplasm</keyword>
<keyword id="KW-0235">DNA replication</keyword>
<keyword id="KW-0479">Metal-binding</keyword>
<keyword id="KW-1185">Reference proteome</keyword>
<keyword id="KW-0677">Repeat</keyword>
<keyword id="KW-0346">Stress response</keyword>
<keyword id="KW-0862">Zinc</keyword>
<keyword id="KW-0863">Zinc-finger</keyword>
<organism>
    <name type="scientific">Delftia acidovorans (strain DSM 14801 / SPH-1)</name>
    <dbReference type="NCBI Taxonomy" id="398578"/>
    <lineage>
        <taxon>Bacteria</taxon>
        <taxon>Pseudomonadati</taxon>
        <taxon>Pseudomonadota</taxon>
        <taxon>Betaproteobacteria</taxon>
        <taxon>Burkholderiales</taxon>
        <taxon>Comamonadaceae</taxon>
        <taxon>Delftia</taxon>
    </lineage>
</organism>
<sequence length="380" mass="40995">MSKRDFYEVLGVAKNASDDDIKKAYRKLAMKYHPDRNQGDAAREAEEKFKEAKEAYEMLSDSNKRAAYDQYGHAGVDPNRGMGGGAEGFGGFAEAFGDIFGDMFNQGGGRRGGAGGGRQVYRGNDLSYAMEITLEEAAHGKDAQIRIPSWDGCDTCHGSGAKPGTSAKTCTTCNGMGSVQMRQGFFSVQQTCPHCRGTGKIIPEPCTSCGGQGKVKRQKTLEVKIPAGIDDGMRIRSSGNGEPGTNGGPAGDLYIEIRIKDHDIFERDGDDLHCNVPVSFITAALGGEIEVPTLSGKAAIDIPEGTQAGKQFRLRGKGIKGVRSSYPGDLYCHIVVETPVKLTEYQRKLLRELEESLKKGGAKHSPSGESWTDRLKSFFS</sequence>
<dbReference type="EMBL" id="CP000884">
    <property type="protein sequence ID" value="ABX37861.1"/>
    <property type="molecule type" value="Genomic_DNA"/>
</dbReference>
<dbReference type="RefSeq" id="WP_012207031.1">
    <property type="nucleotide sequence ID" value="NC_010002.1"/>
</dbReference>
<dbReference type="SMR" id="A9BNG6"/>
<dbReference type="STRING" id="398578.Daci_5232"/>
<dbReference type="GeneID" id="24115854"/>
<dbReference type="KEGG" id="dac:Daci_5232"/>
<dbReference type="eggNOG" id="COG0484">
    <property type="taxonomic scope" value="Bacteria"/>
</dbReference>
<dbReference type="HOGENOM" id="CLU_017633_0_7_4"/>
<dbReference type="Proteomes" id="UP000000784">
    <property type="component" value="Chromosome"/>
</dbReference>
<dbReference type="GO" id="GO:0005737">
    <property type="term" value="C:cytoplasm"/>
    <property type="evidence" value="ECO:0007669"/>
    <property type="project" value="UniProtKB-SubCell"/>
</dbReference>
<dbReference type="GO" id="GO:0005524">
    <property type="term" value="F:ATP binding"/>
    <property type="evidence" value="ECO:0007669"/>
    <property type="project" value="InterPro"/>
</dbReference>
<dbReference type="GO" id="GO:0031072">
    <property type="term" value="F:heat shock protein binding"/>
    <property type="evidence" value="ECO:0007669"/>
    <property type="project" value="InterPro"/>
</dbReference>
<dbReference type="GO" id="GO:0051082">
    <property type="term" value="F:unfolded protein binding"/>
    <property type="evidence" value="ECO:0007669"/>
    <property type="project" value="UniProtKB-UniRule"/>
</dbReference>
<dbReference type="GO" id="GO:0008270">
    <property type="term" value="F:zinc ion binding"/>
    <property type="evidence" value="ECO:0007669"/>
    <property type="project" value="UniProtKB-UniRule"/>
</dbReference>
<dbReference type="GO" id="GO:0051085">
    <property type="term" value="P:chaperone cofactor-dependent protein refolding"/>
    <property type="evidence" value="ECO:0007669"/>
    <property type="project" value="TreeGrafter"/>
</dbReference>
<dbReference type="GO" id="GO:0006260">
    <property type="term" value="P:DNA replication"/>
    <property type="evidence" value="ECO:0007669"/>
    <property type="project" value="UniProtKB-KW"/>
</dbReference>
<dbReference type="GO" id="GO:0042026">
    <property type="term" value="P:protein refolding"/>
    <property type="evidence" value="ECO:0007669"/>
    <property type="project" value="TreeGrafter"/>
</dbReference>
<dbReference type="GO" id="GO:0009408">
    <property type="term" value="P:response to heat"/>
    <property type="evidence" value="ECO:0007669"/>
    <property type="project" value="InterPro"/>
</dbReference>
<dbReference type="CDD" id="cd06257">
    <property type="entry name" value="DnaJ"/>
    <property type="match status" value="1"/>
</dbReference>
<dbReference type="CDD" id="cd10747">
    <property type="entry name" value="DnaJ_C"/>
    <property type="match status" value="1"/>
</dbReference>
<dbReference type="CDD" id="cd10719">
    <property type="entry name" value="DnaJ_zf"/>
    <property type="match status" value="1"/>
</dbReference>
<dbReference type="FunFam" id="1.10.287.110:FF:000034">
    <property type="entry name" value="Chaperone protein DnaJ"/>
    <property type="match status" value="1"/>
</dbReference>
<dbReference type="FunFam" id="2.10.230.10:FF:000002">
    <property type="entry name" value="Molecular chaperone DnaJ"/>
    <property type="match status" value="1"/>
</dbReference>
<dbReference type="FunFam" id="2.60.260.20:FF:000004">
    <property type="entry name" value="Molecular chaperone DnaJ"/>
    <property type="match status" value="1"/>
</dbReference>
<dbReference type="Gene3D" id="1.10.287.110">
    <property type="entry name" value="DnaJ domain"/>
    <property type="match status" value="1"/>
</dbReference>
<dbReference type="Gene3D" id="2.10.230.10">
    <property type="entry name" value="Heat shock protein DnaJ, cysteine-rich domain"/>
    <property type="match status" value="1"/>
</dbReference>
<dbReference type="Gene3D" id="2.60.260.20">
    <property type="entry name" value="Urease metallochaperone UreE, N-terminal domain"/>
    <property type="match status" value="2"/>
</dbReference>
<dbReference type="HAMAP" id="MF_01152">
    <property type="entry name" value="DnaJ"/>
    <property type="match status" value="1"/>
</dbReference>
<dbReference type="InterPro" id="IPR012724">
    <property type="entry name" value="DnaJ"/>
</dbReference>
<dbReference type="InterPro" id="IPR002939">
    <property type="entry name" value="DnaJ_C"/>
</dbReference>
<dbReference type="InterPro" id="IPR001623">
    <property type="entry name" value="DnaJ_domain"/>
</dbReference>
<dbReference type="InterPro" id="IPR018253">
    <property type="entry name" value="DnaJ_domain_CS"/>
</dbReference>
<dbReference type="InterPro" id="IPR008971">
    <property type="entry name" value="HSP40/DnaJ_pept-bd"/>
</dbReference>
<dbReference type="InterPro" id="IPR001305">
    <property type="entry name" value="HSP_DnaJ_Cys-rich_dom"/>
</dbReference>
<dbReference type="InterPro" id="IPR036410">
    <property type="entry name" value="HSP_DnaJ_Cys-rich_dom_sf"/>
</dbReference>
<dbReference type="InterPro" id="IPR036869">
    <property type="entry name" value="J_dom_sf"/>
</dbReference>
<dbReference type="NCBIfam" id="TIGR02349">
    <property type="entry name" value="DnaJ_bact"/>
    <property type="match status" value="1"/>
</dbReference>
<dbReference type="NCBIfam" id="NF008035">
    <property type="entry name" value="PRK10767.1"/>
    <property type="match status" value="1"/>
</dbReference>
<dbReference type="PANTHER" id="PTHR43096:SF48">
    <property type="entry name" value="CHAPERONE PROTEIN DNAJ"/>
    <property type="match status" value="1"/>
</dbReference>
<dbReference type="PANTHER" id="PTHR43096">
    <property type="entry name" value="DNAJ HOMOLOG 1, MITOCHONDRIAL-RELATED"/>
    <property type="match status" value="1"/>
</dbReference>
<dbReference type="Pfam" id="PF00226">
    <property type="entry name" value="DnaJ"/>
    <property type="match status" value="1"/>
</dbReference>
<dbReference type="Pfam" id="PF01556">
    <property type="entry name" value="DnaJ_C"/>
    <property type="match status" value="1"/>
</dbReference>
<dbReference type="Pfam" id="PF00684">
    <property type="entry name" value="DnaJ_CXXCXGXG"/>
    <property type="match status" value="1"/>
</dbReference>
<dbReference type="PRINTS" id="PR00625">
    <property type="entry name" value="JDOMAIN"/>
</dbReference>
<dbReference type="SMART" id="SM00271">
    <property type="entry name" value="DnaJ"/>
    <property type="match status" value="1"/>
</dbReference>
<dbReference type="SUPFAM" id="SSF46565">
    <property type="entry name" value="Chaperone J-domain"/>
    <property type="match status" value="1"/>
</dbReference>
<dbReference type="SUPFAM" id="SSF57938">
    <property type="entry name" value="DnaJ/Hsp40 cysteine-rich domain"/>
    <property type="match status" value="1"/>
</dbReference>
<dbReference type="SUPFAM" id="SSF49493">
    <property type="entry name" value="HSP40/DnaJ peptide-binding domain"/>
    <property type="match status" value="2"/>
</dbReference>
<dbReference type="PROSITE" id="PS00636">
    <property type="entry name" value="DNAJ_1"/>
    <property type="match status" value="1"/>
</dbReference>
<dbReference type="PROSITE" id="PS50076">
    <property type="entry name" value="DNAJ_2"/>
    <property type="match status" value="1"/>
</dbReference>
<dbReference type="PROSITE" id="PS51188">
    <property type="entry name" value="ZF_CR"/>
    <property type="match status" value="1"/>
</dbReference>
<name>DNAJ_DELAS</name>
<proteinExistence type="inferred from homology"/>